<proteinExistence type="evidence at protein level"/>
<reference evidence="11 12" key="1">
    <citation type="journal article" date="1996" name="Eur. J. Biochem.">
        <title>Molecular cloning and characterization of a novel mammalian protein kinase harboring a homology domain that defines a subfamily of serine/threonine kinases.</title>
        <authorList>
            <person name="Becker W."/>
            <person name="Heukelbach J."/>
            <person name="Kentrup H."/>
            <person name="Joost H.G."/>
        </authorList>
    </citation>
    <scope>NUCLEOTIDE SEQUENCE [MRNA]</scope>
    <scope>FUNCTION</scope>
    <scope>AUTOPHOSPHORYLATION</scope>
    <scope>TISSUE SPECIFICITY</scope>
    <source>
        <strain evidence="12">Sprague-Dawley</strain>
        <tissue evidence="12">Ependymocyte</tissue>
    </source>
</reference>
<reference evidence="11" key="2">
    <citation type="journal article" date="2000" name="Brain Res.">
        <title>SNRK, a member of the SNF1 family, is related to low K(+)-induced apoptosis of cultured rat cerebellar granule neurons.</title>
        <authorList>
            <person name="Yoshida K."/>
            <person name="Yamada M."/>
            <person name="Nishio C."/>
            <person name="Konishi A."/>
            <person name="Hatanaka H."/>
        </authorList>
    </citation>
    <scope>NUCLEOTIDE SEQUENCE [MRNA]</scope>
    <scope>FUNCTION</scope>
    <scope>DEVELOPMENTAL STAGE</scope>
    <scope>SUBCELLULAR LOCATION</scope>
    <scope>TISSUE SPECIFICITY</scope>
</reference>
<reference key="3">
    <citation type="journal article" date="2012" name="Nat. Commun.">
        <title>Quantitative maps of protein phosphorylation sites across 14 different rat organs and tissues.</title>
        <authorList>
            <person name="Lundby A."/>
            <person name="Secher A."/>
            <person name="Lage K."/>
            <person name="Nordsborg N.B."/>
            <person name="Dmytriyev A."/>
            <person name="Lundby C."/>
            <person name="Olsen J.V."/>
        </authorList>
    </citation>
    <scope>PHOSPHORYLATION [LARGE SCALE ANALYSIS] AT SER-362; SER-495 AND SER-518</scope>
    <scope>IDENTIFICATION BY MASS SPECTROMETRY [LARGE SCALE ANALYSIS]</scope>
</reference>
<sequence>MAGFKRGYDGKIAGLYDLDKTLGRGHFAVVKLARHVFTGEKVAVKVIDKTKLDTLATGHLFQEVRCMKLVQHPNIVRLYEVIDTQTKLYLILELGDGGDMFDYIMKHEEGLNEDLAKKYFAQIVHAISYCHKLHVVHRDLKPENVVFFEKQGLVKLTDFGFSNKFQPGKKLTTSCGSLAYSAPEILLGDEYDAPAVDIWSLGVILFMLVCGQPPFQEANDSETLTMIMDCKYTVPPRVSAGCRDLITRMLQRDPKRRASLEEIESHPWLQGVDPSPATKYNIPLVSYKNLSEEEHNSIIQRMVLGDIADRDAIVEALETNRYNHITATYFLLAERILREKQEKEIQTRSASPSNIKAQFRQSWPTKIDVPQDLEDDLTATPLSHATVPQSPARAGDSVLNGHRSKGLCDPAKKDELPELAGPALSTVPPASLKPAASGRKCLFRVEEDEEEDEEDKKPVSLSTQVVLRRKPSVTNRLTSRKSAPVLNQIFEEGESDDEFDMDENLPPKLSRLKMNIASPGTVHKRYHRRKSQGRGSSCSSSETSDDDSESRRRLDKDSGLAYSWHRRDSSEGPPGSEGDGGGQSKPSGGGGVDKASPGEQGTGGSGQGGSGGTPSGTAGSSRRCAGPDSSSSSPASAAPRGAELVQSLKLVSLCLGSQLHGAKYILDPQKALLSSVKVQERSTWKMCISAPGPGPSADLDPVRTKKLRNNVLQLPLCEKTISVNIQRSRKEGLLCASSPASCCHVI</sequence>
<keyword id="KW-0067">ATP-binding</keyword>
<keyword id="KW-0418">Kinase</keyword>
<keyword id="KW-0460">Magnesium</keyword>
<keyword id="KW-0479">Metal-binding</keyword>
<keyword id="KW-0488">Methylation</keyword>
<keyword id="KW-0547">Nucleotide-binding</keyword>
<keyword id="KW-0539">Nucleus</keyword>
<keyword id="KW-0597">Phosphoprotein</keyword>
<keyword id="KW-1185">Reference proteome</keyword>
<keyword id="KW-0723">Serine/threonine-protein kinase</keyword>
<keyword id="KW-0808">Transferase</keyword>
<feature type="chain" id="PRO_0000225607" description="SNF-related serine/threonine-protein kinase" evidence="11">
    <location>
        <begin position="1"/>
        <end position="746"/>
    </location>
</feature>
<feature type="domain" description="Protein kinase" evidence="5">
    <location>
        <begin position="16"/>
        <end position="269"/>
    </location>
</feature>
<feature type="domain" description="UBA" evidence="6">
    <location>
        <begin position="291"/>
        <end position="334"/>
    </location>
</feature>
<feature type="region of interest" description="Disordered" evidence="8">
    <location>
        <begin position="383"/>
        <end position="414"/>
    </location>
</feature>
<feature type="region of interest" description="Disordered" evidence="8">
    <location>
        <begin position="494"/>
        <end position="638"/>
    </location>
</feature>
<feature type="compositionally biased region" description="Acidic residues" evidence="8">
    <location>
        <begin position="494"/>
        <end position="503"/>
    </location>
</feature>
<feature type="compositionally biased region" description="Basic residues" evidence="8">
    <location>
        <begin position="522"/>
        <end position="532"/>
    </location>
</feature>
<feature type="compositionally biased region" description="Low complexity" evidence="8">
    <location>
        <begin position="533"/>
        <end position="542"/>
    </location>
</feature>
<feature type="compositionally biased region" description="Basic and acidic residues" evidence="8">
    <location>
        <begin position="549"/>
        <end position="558"/>
    </location>
</feature>
<feature type="compositionally biased region" description="Gly residues" evidence="8">
    <location>
        <begin position="575"/>
        <end position="592"/>
    </location>
</feature>
<feature type="compositionally biased region" description="Gly residues" evidence="8">
    <location>
        <begin position="600"/>
        <end position="614"/>
    </location>
</feature>
<feature type="compositionally biased region" description="Low complexity" evidence="8">
    <location>
        <begin position="615"/>
        <end position="638"/>
    </location>
</feature>
<feature type="active site" description="Proton acceptor" evidence="2 5 7">
    <location>
        <position position="139"/>
    </location>
</feature>
<feature type="binding site" evidence="2 5">
    <location>
        <begin position="22"/>
        <end position="30"/>
    </location>
    <ligand>
        <name>ATP</name>
        <dbReference type="ChEBI" id="CHEBI:30616"/>
    </ligand>
</feature>
<feature type="binding site" evidence="2 5">
    <location>
        <position position="45"/>
    </location>
    <ligand>
        <name>ATP</name>
        <dbReference type="ChEBI" id="CHEBI:30616"/>
    </ligand>
</feature>
<feature type="modified residue" description="Phosphoserine" evidence="3">
    <location>
        <position position="162"/>
    </location>
</feature>
<feature type="modified residue" description="Phosphothreonine; by LKB1" evidence="4">
    <location>
        <position position="173"/>
    </location>
</feature>
<feature type="modified residue" description="Phosphoserine" evidence="14">
    <location>
        <position position="362"/>
    </location>
</feature>
<feature type="modified residue" description="Phosphoserine" evidence="4">
    <location>
        <position position="390"/>
    </location>
</feature>
<feature type="modified residue" description="Phosphoserine" evidence="3">
    <location>
        <position position="482"/>
    </location>
</feature>
<feature type="modified residue" description="Phosphoserine" evidence="14">
    <location>
        <position position="495"/>
    </location>
</feature>
<feature type="modified residue" description="Phosphoserine" evidence="14">
    <location>
        <position position="518"/>
    </location>
</feature>
<feature type="modified residue" description="Omega-N-methylarginine" evidence="3">
    <location>
        <position position="534"/>
    </location>
</feature>
<dbReference type="EC" id="2.7.11.1"/>
<dbReference type="EMBL" id="X89383">
    <property type="protein sequence ID" value="CAA61563.1"/>
    <property type="molecule type" value="mRNA"/>
</dbReference>
<dbReference type="PIR" id="S62365">
    <property type="entry name" value="S62365"/>
</dbReference>
<dbReference type="RefSeq" id="NP_620188.1">
    <property type="nucleotide sequence ID" value="NM_138833.1"/>
</dbReference>
<dbReference type="RefSeq" id="XP_006244119.1">
    <property type="nucleotide sequence ID" value="XM_006244057.3"/>
</dbReference>
<dbReference type="RefSeq" id="XP_006244120.1">
    <property type="nucleotide sequence ID" value="XM_006244058.3"/>
</dbReference>
<dbReference type="RefSeq" id="XP_006244121.1">
    <property type="nucleotide sequence ID" value="XM_006244059.1"/>
</dbReference>
<dbReference type="RefSeq" id="XP_006244122.1">
    <property type="nucleotide sequence ID" value="XM_006244060.3"/>
</dbReference>
<dbReference type="RefSeq" id="XP_006244123.1">
    <property type="nucleotide sequence ID" value="XM_006244061.2"/>
</dbReference>
<dbReference type="RefSeq" id="XP_006244124.1">
    <property type="nucleotide sequence ID" value="XM_006244062.4"/>
</dbReference>
<dbReference type="RefSeq" id="XP_017450914.1">
    <property type="nucleotide sequence ID" value="XM_017595425.1"/>
</dbReference>
<dbReference type="RefSeq" id="XP_017450915.1">
    <property type="nucleotide sequence ID" value="XM_017595426.1"/>
</dbReference>
<dbReference type="RefSeq" id="XP_038936666.1">
    <property type="nucleotide sequence ID" value="XM_039080738.2"/>
</dbReference>
<dbReference type="SMR" id="Q63553"/>
<dbReference type="FunCoup" id="Q63553">
    <property type="interactions" value="3313"/>
</dbReference>
<dbReference type="STRING" id="10116.ENSRNOP00000005422"/>
<dbReference type="GlyGen" id="Q63553">
    <property type="glycosylation" value="1 site"/>
</dbReference>
<dbReference type="iPTMnet" id="Q63553"/>
<dbReference type="PhosphoSitePlus" id="Q63553"/>
<dbReference type="jPOST" id="Q63553"/>
<dbReference type="PaxDb" id="10116-ENSRNOP00000005422"/>
<dbReference type="Ensembl" id="ENSRNOT00000079273.2">
    <property type="protein sequence ID" value="ENSRNOP00000071648.1"/>
    <property type="gene ID" value="ENSRNOG00000004050.7"/>
</dbReference>
<dbReference type="GeneID" id="170837"/>
<dbReference type="KEGG" id="rno:170837"/>
<dbReference type="UCSC" id="RGD:69653">
    <property type="organism name" value="rat"/>
</dbReference>
<dbReference type="AGR" id="RGD:69653"/>
<dbReference type="CTD" id="54861"/>
<dbReference type="RGD" id="69653">
    <property type="gene designation" value="Snrk"/>
</dbReference>
<dbReference type="eggNOG" id="KOG4717">
    <property type="taxonomic scope" value="Eukaryota"/>
</dbReference>
<dbReference type="GeneTree" id="ENSGT00940000155365"/>
<dbReference type="InParanoid" id="Q63553"/>
<dbReference type="OMA" id="EETTGAC"/>
<dbReference type="OrthoDB" id="942095at2759"/>
<dbReference type="PhylomeDB" id="Q63553"/>
<dbReference type="PRO" id="PR:Q63553"/>
<dbReference type="Proteomes" id="UP000002494">
    <property type="component" value="Chromosome 8"/>
</dbReference>
<dbReference type="Bgee" id="ENSRNOG00000004050">
    <property type="expression patterns" value="Expressed in cerebellum and 18 other cell types or tissues"/>
</dbReference>
<dbReference type="GO" id="GO:0005634">
    <property type="term" value="C:nucleus"/>
    <property type="evidence" value="ECO:0000314"/>
    <property type="project" value="UniProtKB"/>
</dbReference>
<dbReference type="GO" id="GO:0005524">
    <property type="term" value="F:ATP binding"/>
    <property type="evidence" value="ECO:0000314"/>
    <property type="project" value="UniProtKB"/>
</dbReference>
<dbReference type="GO" id="GO:0000287">
    <property type="term" value="F:magnesium ion binding"/>
    <property type="evidence" value="ECO:0000314"/>
    <property type="project" value="UniProtKB"/>
</dbReference>
<dbReference type="GO" id="GO:0106310">
    <property type="term" value="F:protein serine kinase activity"/>
    <property type="evidence" value="ECO:0007669"/>
    <property type="project" value="RHEA"/>
</dbReference>
<dbReference type="GO" id="GO:0004674">
    <property type="term" value="F:protein serine/threonine kinase activity"/>
    <property type="evidence" value="ECO:0000314"/>
    <property type="project" value="UniProtKB"/>
</dbReference>
<dbReference type="GO" id="GO:0006468">
    <property type="term" value="P:protein phosphorylation"/>
    <property type="evidence" value="ECO:0000314"/>
    <property type="project" value="UniProtKB"/>
</dbReference>
<dbReference type="GO" id="GO:0043523">
    <property type="term" value="P:regulation of neuron apoptotic process"/>
    <property type="evidence" value="ECO:0000304"/>
    <property type="project" value="UniProtKB"/>
</dbReference>
<dbReference type="CDD" id="cd14074">
    <property type="entry name" value="STKc_SNRK"/>
    <property type="match status" value="1"/>
</dbReference>
<dbReference type="CDD" id="cd14339">
    <property type="entry name" value="UBA_SNRK"/>
    <property type="match status" value="1"/>
</dbReference>
<dbReference type="FunFam" id="3.30.200.20:FF:000003">
    <property type="entry name" value="Non-specific serine/threonine protein kinase"/>
    <property type="match status" value="1"/>
</dbReference>
<dbReference type="FunFam" id="1.10.510.10:FF:000166">
    <property type="entry name" value="SNF-related serine/threonine-protein kinase"/>
    <property type="match status" value="1"/>
</dbReference>
<dbReference type="Gene3D" id="1.10.510.10">
    <property type="entry name" value="Transferase(Phosphotransferase) domain 1"/>
    <property type="match status" value="1"/>
</dbReference>
<dbReference type="InterPro" id="IPR011009">
    <property type="entry name" value="Kinase-like_dom_sf"/>
</dbReference>
<dbReference type="InterPro" id="IPR000719">
    <property type="entry name" value="Prot_kinase_dom"/>
</dbReference>
<dbReference type="InterPro" id="IPR017441">
    <property type="entry name" value="Protein_kinase_ATP_BS"/>
</dbReference>
<dbReference type="InterPro" id="IPR008271">
    <property type="entry name" value="Ser/Thr_kinase_AS"/>
</dbReference>
<dbReference type="InterPro" id="IPR015940">
    <property type="entry name" value="UBA"/>
</dbReference>
<dbReference type="PANTHER" id="PTHR24346">
    <property type="entry name" value="MAP/MICROTUBULE AFFINITY-REGULATING KINASE"/>
    <property type="match status" value="1"/>
</dbReference>
<dbReference type="PANTHER" id="PTHR24346:SF90">
    <property type="entry name" value="SNF RELATED KINASE"/>
    <property type="match status" value="1"/>
</dbReference>
<dbReference type="Pfam" id="PF00069">
    <property type="entry name" value="Pkinase"/>
    <property type="match status" value="1"/>
</dbReference>
<dbReference type="SMART" id="SM00220">
    <property type="entry name" value="S_TKc"/>
    <property type="match status" value="1"/>
</dbReference>
<dbReference type="SUPFAM" id="SSF56112">
    <property type="entry name" value="Protein kinase-like (PK-like)"/>
    <property type="match status" value="1"/>
</dbReference>
<dbReference type="PROSITE" id="PS00107">
    <property type="entry name" value="PROTEIN_KINASE_ATP"/>
    <property type="match status" value="1"/>
</dbReference>
<dbReference type="PROSITE" id="PS50011">
    <property type="entry name" value="PROTEIN_KINASE_DOM"/>
    <property type="match status" value="1"/>
</dbReference>
<dbReference type="PROSITE" id="PS00108">
    <property type="entry name" value="PROTEIN_KINASE_ST"/>
    <property type="match status" value="1"/>
</dbReference>
<dbReference type="PROSITE" id="PS50030">
    <property type="entry name" value="UBA"/>
    <property type="match status" value="1"/>
</dbReference>
<protein>
    <recommendedName>
        <fullName>SNF-related serine/threonine-protein kinase</fullName>
        <ecNumber>2.7.11.1</ecNumber>
    </recommendedName>
    <alternativeName>
        <fullName>SNF1-related kinase</fullName>
    </alternativeName>
</protein>
<organism>
    <name type="scientific">Rattus norvegicus</name>
    <name type="common">Rat</name>
    <dbReference type="NCBI Taxonomy" id="10116"/>
    <lineage>
        <taxon>Eukaryota</taxon>
        <taxon>Metazoa</taxon>
        <taxon>Chordata</taxon>
        <taxon>Craniata</taxon>
        <taxon>Vertebrata</taxon>
        <taxon>Euteleostomi</taxon>
        <taxon>Mammalia</taxon>
        <taxon>Eutheria</taxon>
        <taxon>Euarchontoglires</taxon>
        <taxon>Glires</taxon>
        <taxon>Rodentia</taxon>
        <taxon>Myomorpha</taxon>
        <taxon>Muroidea</taxon>
        <taxon>Muridae</taxon>
        <taxon>Murinae</taxon>
        <taxon>Rattus</taxon>
    </lineage>
</organism>
<gene>
    <name evidence="13" type="primary">Snrk</name>
</gene>
<accession>Q63553</accession>
<evidence type="ECO:0000250" key="1"/>
<evidence type="ECO:0000250" key="2">
    <source>
        <dbReference type="UniProtKB" id="P57059"/>
    </source>
</evidence>
<evidence type="ECO:0000250" key="3">
    <source>
        <dbReference type="UniProtKB" id="Q8VDU5"/>
    </source>
</evidence>
<evidence type="ECO:0000250" key="4">
    <source>
        <dbReference type="UniProtKB" id="Q9NRH2"/>
    </source>
</evidence>
<evidence type="ECO:0000255" key="5">
    <source>
        <dbReference type="PROSITE-ProRule" id="PRU00159"/>
    </source>
</evidence>
<evidence type="ECO:0000255" key="6">
    <source>
        <dbReference type="PROSITE-ProRule" id="PRU00212"/>
    </source>
</evidence>
<evidence type="ECO:0000255" key="7">
    <source>
        <dbReference type="PROSITE-ProRule" id="PRU10027"/>
    </source>
</evidence>
<evidence type="ECO:0000256" key="8">
    <source>
        <dbReference type="SAM" id="MobiDB-lite"/>
    </source>
</evidence>
<evidence type="ECO:0000269" key="9">
    <source>
    </source>
</evidence>
<evidence type="ECO:0000269" key="10">
    <source>
    </source>
</evidence>
<evidence type="ECO:0000305" key="11"/>
<evidence type="ECO:0000312" key="12">
    <source>
        <dbReference type="EMBL" id="CAA61563.1"/>
    </source>
</evidence>
<evidence type="ECO:0000312" key="13">
    <source>
        <dbReference type="RGD" id="69653"/>
    </source>
</evidence>
<evidence type="ECO:0007744" key="14">
    <source>
    </source>
</evidence>
<name>SNRK_RAT</name>
<comment type="function">
    <text evidence="4 9 10">May play a role in hematopoietic cell proliferation or differentiation. Potential mediator of neuronal apoptosis.</text>
</comment>
<comment type="catalytic activity">
    <reaction evidence="10">
        <text>L-seryl-[protein] + ATP = O-phospho-L-seryl-[protein] + ADP + H(+)</text>
        <dbReference type="Rhea" id="RHEA:17989"/>
        <dbReference type="Rhea" id="RHEA-COMP:9863"/>
        <dbReference type="Rhea" id="RHEA-COMP:11604"/>
        <dbReference type="ChEBI" id="CHEBI:15378"/>
        <dbReference type="ChEBI" id="CHEBI:29999"/>
        <dbReference type="ChEBI" id="CHEBI:30616"/>
        <dbReference type="ChEBI" id="CHEBI:83421"/>
        <dbReference type="ChEBI" id="CHEBI:456216"/>
        <dbReference type="EC" id="2.7.11.1"/>
    </reaction>
</comment>
<comment type="catalytic activity">
    <reaction evidence="10">
        <text>L-threonyl-[protein] + ATP = O-phospho-L-threonyl-[protein] + ADP + H(+)</text>
        <dbReference type="Rhea" id="RHEA:46608"/>
        <dbReference type="Rhea" id="RHEA-COMP:11060"/>
        <dbReference type="Rhea" id="RHEA-COMP:11605"/>
        <dbReference type="ChEBI" id="CHEBI:15378"/>
        <dbReference type="ChEBI" id="CHEBI:30013"/>
        <dbReference type="ChEBI" id="CHEBI:30616"/>
        <dbReference type="ChEBI" id="CHEBI:61977"/>
        <dbReference type="ChEBI" id="CHEBI:456216"/>
        <dbReference type="EC" id="2.7.11.1"/>
    </reaction>
</comment>
<comment type="cofactor">
    <cofactor evidence="10">
        <name>Mg(2+)</name>
        <dbReference type="ChEBI" id="CHEBI:18420"/>
    </cofactor>
</comment>
<comment type="activity regulation">
    <text evidence="1">Activated by phosphorylation on Thr-173.</text>
</comment>
<comment type="subcellular location">
    <subcellularLocation>
        <location evidence="9">Nucleus</location>
    </subcellularLocation>
</comment>
<comment type="tissue specificity">
    <text evidence="9 10">Ubiquitously expressed in all tissues examined with highest levels in the brain and testis. Strongly expressed in the pyramidal and granule neurons of the hippocampus and also in the cerebellum.</text>
</comment>
<comment type="developmental stage">
    <text evidence="9">Weakly expressed in the cerebellum by 20 dpc, levels increase until 28 days after birth.</text>
</comment>
<comment type="PTM">
    <text evidence="1">Autophosphorylated. Phosphorylation on Thr-173 by STK11/LKB1 in complex with STE20-related adapter-alpha (STRADA) pseudo kinase and CAB39 (By similarity).</text>
</comment>
<comment type="similarity">
    <text evidence="11">Belongs to the protein kinase superfamily. CAMK Ser/Thr protein kinase family.</text>
</comment>